<protein>
    <recommendedName>
        <fullName evidence="1">PKHD-type hydroxylase YbiX</fullName>
        <ecNumber evidence="1">1.14.11.-</ecNumber>
    </recommendedName>
</protein>
<keyword id="KW-0223">Dioxygenase</keyword>
<keyword id="KW-0408">Iron</keyword>
<keyword id="KW-0479">Metal-binding</keyword>
<keyword id="KW-0560">Oxidoreductase</keyword>
<keyword id="KW-0847">Vitamin C</keyword>
<reference key="1">
    <citation type="journal article" date="2009" name="PLoS Genet.">
        <title>Organised genome dynamics in the Escherichia coli species results in highly diverse adaptive paths.</title>
        <authorList>
            <person name="Touchon M."/>
            <person name="Hoede C."/>
            <person name="Tenaillon O."/>
            <person name="Barbe V."/>
            <person name="Baeriswyl S."/>
            <person name="Bidet P."/>
            <person name="Bingen E."/>
            <person name="Bonacorsi S."/>
            <person name="Bouchier C."/>
            <person name="Bouvet O."/>
            <person name="Calteau A."/>
            <person name="Chiapello H."/>
            <person name="Clermont O."/>
            <person name="Cruveiller S."/>
            <person name="Danchin A."/>
            <person name="Diard M."/>
            <person name="Dossat C."/>
            <person name="Karoui M.E."/>
            <person name="Frapy E."/>
            <person name="Garry L."/>
            <person name="Ghigo J.M."/>
            <person name="Gilles A.M."/>
            <person name="Johnson J."/>
            <person name="Le Bouguenec C."/>
            <person name="Lescat M."/>
            <person name="Mangenot S."/>
            <person name="Martinez-Jehanne V."/>
            <person name="Matic I."/>
            <person name="Nassif X."/>
            <person name="Oztas S."/>
            <person name="Petit M.A."/>
            <person name="Pichon C."/>
            <person name="Rouy Z."/>
            <person name="Ruf C.S."/>
            <person name="Schneider D."/>
            <person name="Tourret J."/>
            <person name="Vacherie B."/>
            <person name="Vallenet D."/>
            <person name="Medigue C."/>
            <person name="Rocha E.P.C."/>
            <person name="Denamur E."/>
        </authorList>
    </citation>
    <scope>NUCLEOTIDE SEQUENCE [LARGE SCALE GENOMIC DNA]</scope>
    <source>
        <strain>IAI1</strain>
    </source>
</reference>
<dbReference type="EC" id="1.14.11.-" evidence="1"/>
<dbReference type="EMBL" id="CU928160">
    <property type="protein sequence ID" value="CAQ97707.1"/>
    <property type="molecule type" value="Genomic_DNA"/>
</dbReference>
<dbReference type="RefSeq" id="WP_000990250.1">
    <property type="nucleotide sequence ID" value="NC_011741.1"/>
</dbReference>
<dbReference type="SMR" id="B7M779"/>
<dbReference type="KEGG" id="ecr:ECIAI1_0842"/>
<dbReference type="HOGENOM" id="CLU_106663_0_0_6"/>
<dbReference type="GO" id="GO:0016706">
    <property type="term" value="F:2-oxoglutarate-dependent dioxygenase activity"/>
    <property type="evidence" value="ECO:0007669"/>
    <property type="project" value="UniProtKB-UniRule"/>
</dbReference>
<dbReference type="GO" id="GO:0005506">
    <property type="term" value="F:iron ion binding"/>
    <property type="evidence" value="ECO:0007669"/>
    <property type="project" value="UniProtKB-UniRule"/>
</dbReference>
<dbReference type="GO" id="GO:0031418">
    <property type="term" value="F:L-ascorbic acid binding"/>
    <property type="evidence" value="ECO:0007669"/>
    <property type="project" value="UniProtKB-KW"/>
</dbReference>
<dbReference type="GO" id="GO:0006974">
    <property type="term" value="P:DNA damage response"/>
    <property type="evidence" value="ECO:0007669"/>
    <property type="project" value="TreeGrafter"/>
</dbReference>
<dbReference type="GO" id="GO:0006879">
    <property type="term" value="P:intracellular iron ion homeostasis"/>
    <property type="evidence" value="ECO:0007669"/>
    <property type="project" value="TreeGrafter"/>
</dbReference>
<dbReference type="FunFam" id="2.60.120.620:FF:000006">
    <property type="entry name" value="PKHD-type hydroxylase YbiX"/>
    <property type="match status" value="1"/>
</dbReference>
<dbReference type="FunFam" id="4.10.860.20:FF:000001">
    <property type="entry name" value="PKHD-type hydroxylase YbiX"/>
    <property type="match status" value="1"/>
</dbReference>
<dbReference type="Gene3D" id="2.60.120.620">
    <property type="entry name" value="q2cbj1_9rhob like domain"/>
    <property type="match status" value="1"/>
</dbReference>
<dbReference type="Gene3D" id="4.10.860.20">
    <property type="entry name" value="Rabenosyn, Rab binding domain"/>
    <property type="match status" value="1"/>
</dbReference>
<dbReference type="HAMAP" id="MF_00657">
    <property type="entry name" value="Hydroxyl_YbiX"/>
    <property type="match status" value="1"/>
</dbReference>
<dbReference type="InterPro" id="IPR005123">
    <property type="entry name" value="Oxoglu/Fe-dep_dioxygenase_dom"/>
</dbReference>
<dbReference type="InterPro" id="IPR041097">
    <property type="entry name" value="PKHD_C"/>
</dbReference>
<dbReference type="InterPro" id="IPR023550">
    <property type="entry name" value="PKHD_hydroxylase"/>
</dbReference>
<dbReference type="InterPro" id="IPR006620">
    <property type="entry name" value="Pro_4_hyd_alph"/>
</dbReference>
<dbReference type="InterPro" id="IPR044862">
    <property type="entry name" value="Pro_4_hyd_alph_FE2OG_OXY"/>
</dbReference>
<dbReference type="NCBIfam" id="NF003972">
    <property type="entry name" value="PRK05467.1-1"/>
    <property type="match status" value="1"/>
</dbReference>
<dbReference type="NCBIfam" id="NF003974">
    <property type="entry name" value="PRK05467.1-3"/>
    <property type="match status" value="1"/>
</dbReference>
<dbReference type="NCBIfam" id="NF003975">
    <property type="entry name" value="PRK05467.1-4"/>
    <property type="match status" value="1"/>
</dbReference>
<dbReference type="PANTHER" id="PTHR41536">
    <property type="entry name" value="PKHD-TYPE HYDROXYLASE YBIX"/>
    <property type="match status" value="1"/>
</dbReference>
<dbReference type="PANTHER" id="PTHR41536:SF1">
    <property type="entry name" value="PKHD-TYPE HYDROXYLASE YBIX"/>
    <property type="match status" value="1"/>
</dbReference>
<dbReference type="Pfam" id="PF13640">
    <property type="entry name" value="2OG-FeII_Oxy_3"/>
    <property type="match status" value="1"/>
</dbReference>
<dbReference type="Pfam" id="PF18331">
    <property type="entry name" value="PKHD_C"/>
    <property type="match status" value="1"/>
</dbReference>
<dbReference type="SMART" id="SM00702">
    <property type="entry name" value="P4Hc"/>
    <property type="match status" value="1"/>
</dbReference>
<dbReference type="SUPFAM" id="SSF51197">
    <property type="entry name" value="Clavaminate synthase-like"/>
    <property type="match status" value="1"/>
</dbReference>
<dbReference type="PROSITE" id="PS51471">
    <property type="entry name" value="FE2OG_OXY"/>
    <property type="match status" value="1"/>
</dbReference>
<gene>
    <name evidence="1" type="primary">ybiX</name>
    <name type="ordered locus">ECIAI1_0842</name>
</gene>
<evidence type="ECO:0000255" key="1">
    <source>
        <dbReference type="HAMAP-Rule" id="MF_00657"/>
    </source>
</evidence>
<sequence length="225" mass="25516">MMYPIPGVLSPQDVARFREQLEQAEWVDGRVTTGAQGAQVKNNQQVDTRSTLYAALQNEVLNAVNQHALFFAAALPRTLSTPLFNRYQNNETYGFHVDGAVRSHPQNGWMRTDLSATLFLSDPQSYDGGELVVNDTFGQHRVKLPAGDLVLYPSSSLHCVTPVTRGVRVASFMWIQSMIRDDKKRAMLFELDNNIQSLKSRYGENEEILSLLNLYHNLLREWSEI</sequence>
<proteinExistence type="inferred from homology"/>
<comment type="cofactor">
    <cofactor evidence="1">
        <name>Fe(2+)</name>
        <dbReference type="ChEBI" id="CHEBI:29033"/>
    </cofactor>
    <text evidence="1">Binds 1 Fe(2+) ion per subunit.</text>
</comment>
<comment type="cofactor">
    <cofactor evidence="1">
        <name>L-ascorbate</name>
        <dbReference type="ChEBI" id="CHEBI:38290"/>
    </cofactor>
</comment>
<feature type="chain" id="PRO_1000131212" description="PKHD-type hydroxylase YbiX">
    <location>
        <begin position="1"/>
        <end position="225"/>
    </location>
</feature>
<feature type="domain" description="Fe2OG dioxygenase" evidence="1">
    <location>
        <begin position="78"/>
        <end position="177"/>
    </location>
</feature>
<feature type="binding site" evidence="1">
    <location>
        <position position="96"/>
    </location>
    <ligand>
        <name>Fe cation</name>
        <dbReference type="ChEBI" id="CHEBI:24875"/>
    </ligand>
</feature>
<feature type="binding site" evidence="1">
    <location>
        <position position="98"/>
    </location>
    <ligand>
        <name>Fe cation</name>
        <dbReference type="ChEBI" id="CHEBI:24875"/>
    </ligand>
</feature>
<feature type="binding site" evidence="1">
    <location>
        <position position="158"/>
    </location>
    <ligand>
        <name>Fe cation</name>
        <dbReference type="ChEBI" id="CHEBI:24875"/>
    </ligand>
</feature>
<feature type="binding site" evidence="1">
    <location>
        <position position="168"/>
    </location>
    <ligand>
        <name>2-oxoglutarate</name>
        <dbReference type="ChEBI" id="CHEBI:16810"/>
    </ligand>
</feature>
<name>YBIX_ECO8A</name>
<organism>
    <name type="scientific">Escherichia coli O8 (strain IAI1)</name>
    <dbReference type="NCBI Taxonomy" id="585034"/>
    <lineage>
        <taxon>Bacteria</taxon>
        <taxon>Pseudomonadati</taxon>
        <taxon>Pseudomonadota</taxon>
        <taxon>Gammaproteobacteria</taxon>
        <taxon>Enterobacterales</taxon>
        <taxon>Enterobacteriaceae</taxon>
        <taxon>Escherichia</taxon>
    </lineage>
</organism>
<accession>B7M779</accession>